<proteinExistence type="inferred from homology"/>
<reference key="1">
    <citation type="journal article" date="2010" name="Genome Biol. Evol.">
        <title>Continuing evolution of Burkholderia mallei through genome reduction and large-scale rearrangements.</title>
        <authorList>
            <person name="Losada L."/>
            <person name="Ronning C.M."/>
            <person name="DeShazer D."/>
            <person name="Woods D."/>
            <person name="Fedorova N."/>
            <person name="Kim H.S."/>
            <person name="Shabalina S.A."/>
            <person name="Pearson T.R."/>
            <person name="Brinkac L."/>
            <person name="Tan P."/>
            <person name="Nandi T."/>
            <person name="Crabtree J."/>
            <person name="Badger J."/>
            <person name="Beckstrom-Sternberg S."/>
            <person name="Saqib M."/>
            <person name="Schutzer S.E."/>
            <person name="Keim P."/>
            <person name="Nierman W.C."/>
        </authorList>
    </citation>
    <scope>NUCLEOTIDE SEQUENCE [LARGE SCALE GENOMIC DNA]</scope>
    <source>
        <strain>1710b</strain>
    </source>
</reference>
<feature type="chain" id="PRO_0000253089" description="Putative membrane protein insertion efficiency factor">
    <location>
        <begin position="1"/>
        <end position="89"/>
    </location>
</feature>
<feature type="region of interest" description="Disordered" evidence="2">
    <location>
        <begin position="68"/>
        <end position="89"/>
    </location>
</feature>
<feature type="compositionally biased region" description="Basic and acidic residues" evidence="2">
    <location>
        <begin position="77"/>
        <end position="89"/>
    </location>
</feature>
<name>YIDD_BURP1</name>
<protein>
    <recommendedName>
        <fullName evidence="1">Putative membrane protein insertion efficiency factor</fullName>
    </recommendedName>
</protein>
<gene>
    <name type="ordered locus">BURPS1710b_0303</name>
</gene>
<sequence length="89" mass="9817">MQTVLIALLRFYKLAVSPLLGSRCRFYPSCSDYAREAIQYHGAARGTYLAARRLCRCHPFSAGGVDLVPPPNSDARNAPHEAEASSHRL</sequence>
<accession>Q3JXI4</accession>
<evidence type="ECO:0000255" key="1">
    <source>
        <dbReference type="HAMAP-Rule" id="MF_00386"/>
    </source>
</evidence>
<evidence type="ECO:0000256" key="2">
    <source>
        <dbReference type="SAM" id="MobiDB-lite"/>
    </source>
</evidence>
<dbReference type="EMBL" id="CP000124">
    <property type="protein sequence ID" value="ABA47943.1"/>
    <property type="molecule type" value="Genomic_DNA"/>
</dbReference>
<dbReference type="EnsemblBacteria" id="ABA47943">
    <property type="protein sequence ID" value="ABA47943"/>
    <property type="gene ID" value="BURPS1710b_0303"/>
</dbReference>
<dbReference type="KEGG" id="bpm:BURPS1710b_0303"/>
<dbReference type="HOGENOM" id="CLU_144811_2_2_4"/>
<dbReference type="Proteomes" id="UP000002700">
    <property type="component" value="Chromosome I"/>
</dbReference>
<dbReference type="GO" id="GO:0005886">
    <property type="term" value="C:plasma membrane"/>
    <property type="evidence" value="ECO:0007669"/>
    <property type="project" value="UniProtKB-SubCell"/>
</dbReference>
<dbReference type="HAMAP" id="MF_00386">
    <property type="entry name" value="UPF0161_YidD"/>
    <property type="match status" value="1"/>
</dbReference>
<dbReference type="InterPro" id="IPR002696">
    <property type="entry name" value="Membr_insert_effic_factor_YidD"/>
</dbReference>
<dbReference type="NCBIfam" id="TIGR00278">
    <property type="entry name" value="membrane protein insertion efficiency factor YidD"/>
    <property type="match status" value="1"/>
</dbReference>
<dbReference type="PANTHER" id="PTHR33383">
    <property type="entry name" value="MEMBRANE PROTEIN INSERTION EFFICIENCY FACTOR-RELATED"/>
    <property type="match status" value="1"/>
</dbReference>
<dbReference type="PANTHER" id="PTHR33383:SF1">
    <property type="entry name" value="MEMBRANE PROTEIN INSERTION EFFICIENCY FACTOR-RELATED"/>
    <property type="match status" value="1"/>
</dbReference>
<dbReference type="Pfam" id="PF01809">
    <property type="entry name" value="YidD"/>
    <property type="match status" value="1"/>
</dbReference>
<dbReference type="SMART" id="SM01234">
    <property type="entry name" value="Haemolytic"/>
    <property type="match status" value="1"/>
</dbReference>
<comment type="function">
    <text evidence="1">Could be involved in insertion of integral membrane proteins into the membrane.</text>
</comment>
<comment type="subcellular location">
    <subcellularLocation>
        <location evidence="1">Cell inner membrane</location>
        <topology evidence="1">Peripheral membrane protein</topology>
        <orientation evidence="1">Cytoplasmic side</orientation>
    </subcellularLocation>
</comment>
<comment type="similarity">
    <text evidence="1">Belongs to the UPF0161 family.</text>
</comment>
<keyword id="KW-0997">Cell inner membrane</keyword>
<keyword id="KW-1003">Cell membrane</keyword>
<keyword id="KW-0472">Membrane</keyword>
<organism>
    <name type="scientific">Burkholderia pseudomallei (strain 1710b)</name>
    <dbReference type="NCBI Taxonomy" id="320372"/>
    <lineage>
        <taxon>Bacteria</taxon>
        <taxon>Pseudomonadati</taxon>
        <taxon>Pseudomonadota</taxon>
        <taxon>Betaproteobacteria</taxon>
        <taxon>Burkholderiales</taxon>
        <taxon>Burkholderiaceae</taxon>
        <taxon>Burkholderia</taxon>
        <taxon>pseudomallei group</taxon>
    </lineage>
</organism>